<feature type="chain" id="PRO_0000245302" description="E3 ubiquitin-protein ligase bre1">
    <location>
        <begin position="1"/>
        <end position="760"/>
    </location>
</feature>
<feature type="zinc finger region" description="RING-type" evidence="3">
    <location>
        <begin position="708"/>
        <end position="747"/>
    </location>
</feature>
<feature type="region of interest" description="Disordered" evidence="4">
    <location>
        <begin position="1"/>
        <end position="58"/>
    </location>
</feature>
<feature type="region of interest" description="Disordered" evidence="4">
    <location>
        <begin position="274"/>
        <end position="306"/>
    </location>
</feature>
<feature type="coiled-coil region" evidence="2">
    <location>
        <begin position="210"/>
        <end position="263"/>
    </location>
</feature>
<feature type="coiled-coil region" evidence="2">
    <location>
        <begin position="309"/>
        <end position="561"/>
    </location>
</feature>
<feature type="coiled-coil region" evidence="2">
    <location>
        <begin position="594"/>
        <end position="691"/>
    </location>
</feature>
<feature type="compositionally biased region" description="Basic and acidic residues" evidence="4">
    <location>
        <begin position="18"/>
        <end position="32"/>
    </location>
</feature>
<comment type="function">
    <text evidence="1">E3 ubiquitin-protein ligase that mediates monoubiquitination of histone H2B to form H2BK123ub1. H2BK123ub1 gives a specific tag for epigenetic transcriptional activation and is also a prerequisite for H3K4me and H3K79me formation.</text>
</comment>
<comment type="catalytic activity">
    <reaction evidence="1">
        <text>S-ubiquitinyl-[E2 ubiquitin-conjugating enzyme]-L-cysteine + [acceptor protein]-L-lysine = [E2 ubiquitin-conjugating enzyme]-L-cysteine + N(6)-ubiquitinyl-[acceptor protein]-L-lysine.</text>
        <dbReference type="EC" id="2.3.2.27"/>
    </reaction>
</comment>
<comment type="pathway">
    <text>Protein modification; protein ubiquitination.</text>
</comment>
<comment type="subcellular location">
    <subcellularLocation>
        <location evidence="1">Nucleus</location>
    </subcellularLocation>
</comment>
<comment type="similarity">
    <text evidence="5">Belongs to the BRE1 family.</text>
</comment>
<evidence type="ECO:0000250" key="1">
    <source>
        <dbReference type="UniProtKB" id="Q07457"/>
    </source>
</evidence>
<evidence type="ECO:0000255" key="2"/>
<evidence type="ECO:0000255" key="3">
    <source>
        <dbReference type="PROSITE-ProRule" id="PRU00175"/>
    </source>
</evidence>
<evidence type="ECO:0000256" key="4">
    <source>
        <dbReference type="SAM" id="MobiDB-lite"/>
    </source>
</evidence>
<evidence type="ECO:0000305" key="5"/>
<reference key="1">
    <citation type="journal article" date="2005" name="Nature">
        <title>Genome sequencing and analysis of Aspergillus oryzae.</title>
        <authorList>
            <person name="Machida M."/>
            <person name="Asai K."/>
            <person name="Sano M."/>
            <person name="Tanaka T."/>
            <person name="Kumagai T."/>
            <person name="Terai G."/>
            <person name="Kusumoto K."/>
            <person name="Arima T."/>
            <person name="Akita O."/>
            <person name="Kashiwagi Y."/>
            <person name="Abe K."/>
            <person name="Gomi K."/>
            <person name="Horiuchi H."/>
            <person name="Kitamoto K."/>
            <person name="Kobayashi T."/>
            <person name="Takeuchi M."/>
            <person name="Denning D.W."/>
            <person name="Galagan J.E."/>
            <person name="Nierman W.C."/>
            <person name="Yu J."/>
            <person name="Archer D.B."/>
            <person name="Bennett J.W."/>
            <person name="Bhatnagar D."/>
            <person name="Cleveland T.E."/>
            <person name="Fedorova N.D."/>
            <person name="Gotoh O."/>
            <person name="Horikawa H."/>
            <person name="Hosoyama A."/>
            <person name="Ichinomiya M."/>
            <person name="Igarashi R."/>
            <person name="Iwashita K."/>
            <person name="Juvvadi P.R."/>
            <person name="Kato M."/>
            <person name="Kato Y."/>
            <person name="Kin T."/>
            <person name="Kokubun A."/>
            <person name="Maeda H."/>
            <person name="Maeyama N."/>
            <person name="Maruyama J."/>
            <person name="Nagasaki H."/>
            <person name="Nakajima T."/>
            <person name="Oda K."/>
            <person name="Okada K."/>
            <person name="Paulsen I."/>
            <person name="Sakamoto K."/>
            <person name="Sawano T."/>
            <person name="Takahashi M."/>
            <person name="Takase K."/>
            <person name="Terabayashi Y."/>
            <person name="Wortman J.R."/>
            <person name="Yamada O."/>
            <person name="Yamagata Y."/>
            <person name="Anazawa H."/>
            <person name="Hata Y."/>
            <person name="Koide Y."/>
            <person name="Komori T."/>
            <person name="Koyama Y."/>
            <person name="Minetoki T."/>
            <person name="Suharnan S."/>
            <person name="Tanaka A."/>
            <person name="Isono K."/>
            <person name="Kuhara S."/>
            <person name="Ogasawara N."/>
            <person name="Kikuchi H."/>
        </authorList>
    </citation>
    <scope>NUCLEOTIDE SEQUENCE [LARGE SCALE GENOMIC DNA]</scope>
    <source>
        <strain>ATCC 42149 / RIB 40</strain>
    </source>
</reference>
<organism>
    <name type="scientific">Aspergillus oryzae (strain ATCC 42149 / RIB 40)</name>
    <name type="common">Yellow koji mold</name>
    <dbReference type="NCBI Taxonomy" id="510516"/>
    <lineage>
        <taxon>Eukaryota</taxon>
        <taxon>Fungi</taxon>
        <taxon>Dikarya</taxon>
        <taxon>Ascomycota</taxon>
        <taxon>Pezizomycotina</taxon>
        <taxon>Eurotiomycetes</taxon>
        <taxon>Eurotiomycetidae</taxon>
        <taxon>Eurotiales</taxon>
        <taxon>Aspergillaceae</taxon>
        <taxon>Aspergillus</taxon>
        <taxon>Aspergillus subgen. Circumdati</taxon>
    </lineage>
</organism>
<keyword id="KW-0156">Chromatin regulator</keyword>
<keyword id="KW-0175">Coiled coil</keyword>
<keyword id="KW-0479">Metal-binding</keyword>
<keyword id="KW-0539">Nucleus</keyword>
<keyword id="KW-1185">Reference proteome</keyword>
<keyword id="KW-0808">Transferase</keyword>
<keyword id="KW-0833">Ubl conjugation pathway</keyword>
<keyword id="KW-0862">Zinc</keyword>
<keyword id="KW-0863">Zinc-finger</keyword>
<dbReference type="EC" id="2.3.2.27" evidence="1"/>
<dbReference type="EMBL" id="BA000053">
    <property type="protein sequence ID" value="BAE61855.1"/>
    <property type="molecule type" value="Genomic_DNA"/>
</dbReference>
<dbReference type="SMR" id="Q2U9B0"/>
<dbReference type="STRING" id="510516.Q2U9B0"/>
<dbReference type="EnsemblFungi" id="BAE61855">
    <property type="protein sequence ID" value="BAE61855"/>
    <property type="gene ID" value="AO090701000102"/>
</dbReference>
<dbReference type="HOGENOM" id="CLU_019713_2_0_1"/>
<dbReference type="OMA" id="YRQMQEY"/>
<dbReference type="UniPathway" id="UPA00143"/>
<dbReference type="Proteomes" id="UP000006564">
    <property type="component" value="Chromosome 5"/>
</dbReference>
<dbReference type="GO" id="GO:0033503">
    <property type="term" value="C:HULC complex"/>
    <property type="evidence" value="ECO:0007669"/>
    <property type="project" value="TreeGrafter"/>
</dbReference>
<dbReference type="GO" id="GO:0005634">
    <property type="term" value="C:nucleus"/>
    <property type="evidence" value="ECO:0007669"/>
    <property type="project" value="UniProtKB-SubCell"/>
</dbReference>
<dbReference type="GO" id="GO:0061630">
    <property type="term" value="F:ubiquitin protein ligase activity"/>
    <property type="evidence" value="ECO:0007669"/>
    <property type="project" value="TreeGrafter"/>
</dbReference>
<dbReference type="GO" id="GO:0008270">
    <property type="term" value="F:zinc ion binding"/>
    <property type="evidence" value="ECO:0007669"/>
    <property type="project" value="UniProtKB-KW"/>
</dbReference>
<dbReference type="GO" id="GO:0006325">
    <property type="term" value="P:chromatin organization"/>
    <property type="evidence" value="ECO:0007669"/>
    <property type="project" value="UniProtKB-KW"/>
</dbReference>
<dbReference type="GO" id="GO:0016567">
    <property type="term" value="P:protein ubiquitination"/>
    <property type="evidence" value="ECO:0007669"/>
    <property type="project" value="UniProtKB-UniPathway"/>
</dbReference>
<dbReference type="CDD" id="cd16499">
    <property type="entry name" value="RING-HC_Bre1-like"/>
    <property type="match status" value="1"/>
</dbReference>
<dbReference type="Gene3D" id="3.30.40.10">
    <property type="entry name" value="Zinc/RING finger domain, C3HC4 (zinc finger)"/>
    <property type="match status" value="1"/>
</dbReference>
<dbReference type="InterPro" id="IPR013956">
    <property type="entry name" value="E3_ubiquit_lig_Bre1"/>
</dbReference>
<dbReference type="InterPro" id="IPR001841">
    <property type="entry name" value="Znf_RING"/>
</dbReference>
<dbReference type="InterPro" id="IPR013083">
    <property type="entry name" value="Znf_RING/FYVE/PHD"/>
</dbReference>
<dbReference type="InterPro" id="IPR017907">
    <property type="entry name" value="Znf_RING_CS"/>
</dbReference>
<dbReference type="PANTHER" id="PTHR23163:SF0">
    <property type="entry name" value="E3 UBIQUITIN-PROTEIN LIGASE BRE1"/>
    <property type="match status" value="1"/>
</dbReference>
<dbReference type="PANTHER" id="PTHR23163">
    <property type="entry name" value="RING FINGER PROTEIN-RELATED"/>
    <property type="match status" value="1"/>
</dbReference>
<dbReference type="Pfam" id="PF08647">
    <property type="entry name" value="BRE1"/>
    <property type="match status" value="1"/>
</dbReference>
<dbReference type="Pfam" id="PF13923">
    <property type="entry name" value="zf-C3HC4_2"/>
    <property type="match status" value="1"/>
</dbReference>
<dbReference type="SMART" id="SM00184">
    <property type="entry name" value="RING"/>
    <property type="match status" value="1"/>
</dbReference>
<dbReference type="SUPFAM" id="SSF57850">
    <property type="entry name" value="RING/U-box"/>
    <property type="match status" value="1"/>
</dbReference>
<dbReference type="PROSITE" id="PS00518">
    <property type="entry name" value="ZF_RING_1"/>
    <property type="match status" value="1"/>
</dbReference>
<dbReference type="PROSITE" id="PS50089">
    <property type="entry name" value="ZF_RING_2"/>
    <property type="match status" value="1"/>
</dbReference>
<name>BRE1_ASPOR</name>
<gene>
    <name type="primary">bre1</name>
    <name type="ORF">AO090701000102</name>
</gene>
<accession>Q2U9B0</accession>
<sequence>MPVAEASPVASSEPGFVKMEDRKRAATSDHNDSAPPLKKQATSVNGGSKPHPDADMPWKDDLEVSLGLAGVVGFMSFQGGLRYPSSAEPTTSLTIKDAIWRQMQEYKREKVSLEAKLKDMSKAATRHNEHLRVIDTWYNQVCGSTLIDEVKLLLGAAEDIKGDRPTFQSSLSFDDVDNFEKHLKSRSNDIRDIISRLVKNTPKSPPEICELQSQLAKKLAEEKATIAELDKALSEKQQLEESLEEASLRYMVAEKKLDRARSLTVAKLEKQYILGPQRPGGDSASGQREEQSVSNGATPSAERGPELDEAHNKLVAISEKQKEQLQKLETENANLLSQITDLNIKRSKLTDDDYAHTDLFKQMRSQYDDVVKRINHLEATNVQLREEAVKLRSERTAYRNQVDEETQNVIAEKEAQLIRAETDLARIRNARDELLADQQMRKAAQEQEKTAVLKVQELAEARNAQIASLESEVERLRLQVENAKATQADSSDIPVEELRGKYQVLERQYAMLNTELTSMQTACKKYSTLASQKVTDFSALEEKMARLTAEKSKADQKYFAAMKSKEARDLEVRTLRMQNSKSSDIVSQLKESEAATRSLLANMEKQVSETKEALNSMMNKHHATQQQLAENGIVIEGLKGQINELKTLSTSKDATLASTSSACRQAETEIEGLKATLADTKKSLDNWKNKSLGNSSSEYEMLRTLALCTVCRRNFKNTAIKTCGHVFCKDCVEERLTSRSRKCPNCNRSFGNNDYMHITL</sequence>
<protein>
    <recommendedName>
        <fullName>E3 ubiquitin-protein ligase bre1</fullName>
        <ecNumber evidence="1">2.3.2.27</ecNumber>
    </recommendedName>
    <alternativeName>
        <fullName evidence="5">RING-type E3 ubiquitin transferase bre1</fullName>
    </alternativeName>
</protein>
<proteinExistence type="inferred from homology"/>